<evidence type="ECO:0000255" key="1">
    <source>
        <dbReference type="HAMAP-Rule" id="MF_01061"/>
    </source>
</evidence>
<evidence type="ECO:0000256" key="2">
    <source>
        <dbReference type="SAM" id="MobiDB-lite"/>
    </source>
</evidence>
<reference key="1">
    <citation type="journal article" date="2008" name="J. Bacteriol.">
        <title>The complete genome sequence of Escherichia coli DH10B: insights into the biology of a laboratory workhorse.</title>
        <authorList>
            <person name="Durfee T."/>
            <person name="Nelson R."/>
            <person name="Baldwin S."/>
            <person name="Plunkett G. III"/>
            <person name="Burland V."/>
            <person name="Mau B."/>
            <person name="Petrosino J.F."/>
            <person name="Qin X."/>
            <person name="Muzny D.M."/>
            <person name="Ayele M."/>
            <person name="Gibbs R.A."/>
            <person name="Csorgo B."/>
            <person name="Posfai G."/>
            <person name="Weinstock G.M."/>
            <person name="Blattner F.R."/>
        </authorList>
    </citation>
    <scope>NUCLEOTIDE SEQUENCE [LARGE SCALE GENOMIC DNA]</scope>
    <source>
        <strain>K12 / DH10B</strain>
    </source>
</reference>
<accession>B1XFH3</accession>
<proteinExistence type="inferred from homology"/>
<gene>
    <name evidence="1" type="primary">dnaT</name>
    <name type="ordered locus">ECDH10B_4518</name>
</gene>
<comment type="function">
    <text evidence="1">Involved in the restart of stalled replication forks, which reloads the replicative helicase on sites other than the origin of replication. Can function in multiple replication restart pathways. Displaces ssDNA from a PriB-ssDNA complex. Probably forms a spiral filament on ssDNA.</text>
</comment>
<comment type="subunit">
    <text evidence="1">Homooligomerizes. Interacts with PriB. Component of the replication restart primosome. Primosome assembly occurs via a 'hand-off' mechanism. PriA binds to replication forks, subsequently PriB then DnaT bind; DnaT then displaces ssDNA to generate the helicase loading substrate.</text>
</comment>
<comment type="similarity">
    <text evidence="1">Belongs to the DnaT family.</text>
</comment>
<dbReference type="EMBL" id="CP000948">
    <property type="protein sequence ID" value="ACB05291.1"/>
    <property type="molecule type" value="Genomic_DNA"/>
</dbReference>
<dbReference type="RefSeq" id="WP_000098818.1">
    <property type="nucleotide sequence ID" value="NC_010473.1"/>
</dbReference>
<dbReference type="SMR" id="B1XFH3"/>
<dbReference type="GeneID" id="93777486"/>
<dbReference type="KEGG" id="ecd:ECDH10B_4518"/>
<dbReference type="HOGENOM" id="CLU_1501592_0_0_6"/>
<dbReference type="GO" id="GO:1990077">
    <property type="term" value="C:primosome complex"/>
    <property type="evidence" value="ECO:0007669"/>
    <property type="project" value="UniProtKB-KW"/>
</dbReference>
<dbReference type="GO" id="GO:0006269">
    <property type="term" value="P:DNA replication, synthesis of primer"/>
    <property type="evidence" value="ECO:0007669"/>
    <property type="project" value="UniProtKB-UniRule"/>
</dbReference>
<dbReference type="FunFam" id="1.10.8.1180:FF:000001">
    <property type="entry name" value="Primosomal protein 1"/>
    <property type="match status" value="1"/>
</dbReference>
<dbReference type="Gene3D" id="1.10.8.1180">
    <property type="match status" value="1"/>
</dbReference>
<dbReference type="HAMAP" id="MF_01061">
    <property type="entry name" value="DnaT"/>
    <property type="match status" value="1"/>
</dbReference>
<dbReference type="InterPro" id="IPR020917">
    <property type="entry name" value="DnaT"/>
</dbReference>
<dbReference type="InterPro" id="IPR040480">
    <property type="entry name" value="DnaT_DNA_bind"/>
</dbReference>
<dbReference type="NCBIfam" id="NF002770">
    <property type="entry name" value="PRK02854.1"/>
    <property type="match status" value="1"/>
</dbReference>
<dbReference type="Pfam" id="PF17948">
    <property type="entry name" value="DnaT"/>
    <property type="match status" value="1"/>
</dbReference>
<feature type="chain" id="PRO_1000136433" description="Replication restart protein DnaT">
    <location>
        <begin position="1"/>
        <end position="179"/>
    </location>
</feature>
<feature type="region of interest" description="Disordered" evidence="2">
    <location>
        <begin position="156"/>
        <end position="179"/>
    </location>
</feature>
<protein>
    <recommendedName>
        <fullName evidence="1">Replication restart protein DnaT</fullName>
    </recommendedName>
</protein>
<keyword id="KW-0235">DNA replication</keyword>
<keyword id="KW-0238">DNA-binding</keyword>
<keyword id="KW-0639">Primosome</keyword>
<organism>
    <name type="scientific">Escherichia coli (strain K12 / DH10B)</name>
    <dbReference type="NCBI Taxonomy" id="316385"/>
    <lineage>
        <taxon>Bacteria</taxon>
        <taxon>Pseudomonadati</taxon>
        <taxon>Pseudomonadota</taxon>
        <taxon>Gammaproteobacteria</taxon>
        <taxon>Enterobacterales</taxon>
        <taxon>Enterobacteriaceae</taxon>
        <taxon>Escherichia</taxon>
    </lineage>
</organism>
<sequence length="179" mass="19455">MSSRVLTPDVVGIDALVHDHQTVLAKAEGGVVAVFANNAPAFYAVTPARLAELLALEEKLARPGSDVALDDQLYQEPQAAPVAVPMGKFAMYPDWQPDADFIRLAALWGVALREPVTTEELASFIAYWQAEGKVFHHVQWQQKLARSLQIGRASNGGLPKRDVNTVSEPDSQIPPGFRG</sequence>
<name>DNAT_ECODH</name>